<organism>
    <name type="scientific">Arabidopsis thaliana</name>
    <name type="common">Mouse-ear cress</name>
    <dbReference type="NCBI Taxonomy" id="3702"/>
    <lineage>
        <taxon>Eukaryota</taxon>
        <taxon>Viridiplantae</taxon>
        <taxon>Streptophyta</taxon>
        <taxon>Embryophyta</taxon>
        <taxon>Tracheophyta</taxon>
        <taxon>Spermatophyta</taxon>
        <taxon>Magnoliopsida</taxon>
        <taxon>eudicotyledons</taxon>
        <taxon>Gunneridae</taxon>
        <taxon>Pentapetalae</taxon>
        <taxon>rosids</taxon>
        <taxon>malvids</taxon>
        <taxon>Brassicales</taxon>
        <taxon>Brassicaceae</taxon>
        <taxon>Camelineae</taxon>
        <taxon>Arabidopsis</taxon>
    </lineage>
</organism>
<evidence type="ECO:0000250" key="1"/>
<evidence type="ECO:0000256" key="2">
    <source>
        <dbReference type="SAM" id="MobiDB-lite"/>
    </source>
</evidence>
<evidence type="ECO:0000305" key="3"/>
<dbReference type="EMBL" id="AC005489">
    <property type="protein sequence ID" value="AAD32890.1"/>
    <property type="status" value="ALT_SEQ"/>
    <property type="molecule type" value="Genomic_DNA"/>
</dbReference>
<dbReference type="EMBL" id="CP002684">
    <property type="protein sequence ID" value="AEE28573.1"/>
    <property type="molecule type" value="Genomic_DNA"/>
</dbReference>
<dbReference type="RefSeq" id="NP_563869.1">
    <molecule id="F4I4B6-1"/>
    <property type="nucleotide sequence ID" value="NM_100913.2"/>
</dbReference>
<dbReference type="SMR" id="F4I4B6"/>
<dbReference type="STRING" id="3702.F4I4B6"/>
<dbReference type="TCDB" id="1.F.2.1.3">
    <property type="family name" value="the octameric exocyst (exocyst) family"/>
</dbReference>
<dbReference type="PaxDb" id="3702-AT1G10385.1"/>
<dbReference type="ProteomicsDB" id="222520">
    <molecule id="F4I4B6-1"/>
</dbReference>
<dbReference type="EnsemblPlants" id="AT1G10385.1">
    <molecule id="F4I4B6-1"/>
    <property type="protein sequence ID" value="AT1G10385.1"/>
    <property type="gene ID" value="AT1G10385"/>
</dbReference>
<dbReference type="GeneID" id="837578"/>
<dbReference type="Gramene" id="AT1G10385.1">
    <molecule id="F4I4B6-1"/>
    <property type="protein sequence ID" value="AT1G10385.1"/>
    <property type="gene ID" value="AT1G10385"/>
</dbReference>
<dbReference type="KEGG" id="ath:AT1G10385"/>
<dbReference type="Araport" id="AT1G10385"/>
<dbReference type="TAIR" id="AT1G10385"/>
<dbReference type="eggNOG" id="KOG2215">
    <property type="taxonomic scope" value="Eukaryota"/>
</dbReference>
<dbReference type="HOGENOM" id="CLU_015217_2_0_1"/>
<dbReference type="InParanoid" id="F4I4B6"/>
<dbReference type="OMA" id="ECVHICL"/>
<dbReference type="PRO" id="PR:F4I4B6"/>
<dbReference type="Proteomes" id="UP000006548">
    <property type="component" value="Chromosome 1"/>
</dbReference>
<dbReference type="ExpressionAtlas" id="F4I4B6">
    <property type="expression patterns" value="baseline and differential"/>
</dbReference>
<dbReference type="GO" id="GO:0000145">
    <property type="term" value="C:exocyst"/>
    <property type="evidence" value="ECO:0007669"/>
    <property type="project" value="InterPro"/>
</dbReference>
<dbReference type="GO" id="GO:0006887">
    <property type="term" value="P:exocytosis"/>
    <property type="evidence" value="ECO:0007669"/>
    <property type="project" value="UniProtKB-KW"/>
</dbReference>
<dbReference type="FunFam" id="1.20.58.1210:FF:000002">
    <property type="entry name" value="Exocyst complex component EXO84B"/>
    <property type="match status" value="1"/>
</dbReference>
<dbReference type="FunFam" id="1.20.58.1220:FF:000001">
    <property type="entry name" value="Exocyst complex component EXO84B"/>
    <property type="match status" value="1"/>
</dbReference>
<dbReference type="Gene3D" id="1.20.58.1220">
    <property type="entry name" value="Exo84p, C-terminal helical domain"/>
    <property type="match status" value="1"/>
</dbReference>
<dbReference type="Gene3D" id="1.20.58.1210">
    <property type="entry name" value="Exo84p, N-terminal helical domain"/>
    <property type="match status" value="1"/>
</dbReference>
<dbReference type="InterPro" id="IPR016159">
    <property type="entry name" value="Cullin_repeat-like_dom_sf"/>
</dbReference>
<dbReference type="InterPro" id="IPR033961">
    <property type="entry name" value="Exo84"/>
</dbReference>
<dbReference type="InterPro" id="IPR032403">
    <property type="entry name" value="Exo84_C"/>
</dbReference>
<dbReference type="InterPro" id="IPR042561">
    <property type="entry name" value="Exo84_C_1"/>
</dbReference>
<dbReference type="InterPro" id="IPR042560">
    <property type="entry name" value="Exo84_C_2"/>
</dbReference>
<dbReference type="PANTHER" id="PTHR21426">
    <property type="entry name" value="EXOCYST COMPLEX COMPONENT 8"/>
    <property type="match status" value="1"/>
</dbReference>
<dbReference type="PANTHER" id="PTHR21426:SF15">
    <property type="entry name" value="EXOCYST COMPLEX COMPONENT EXO84A"/>
    <property type="match status" value="1"/>
</dbReference>
<dbReference type="Pfam" id="PF16528">
    <property type="entry name" value="Exo84_C"/>
    <property type="match status" value="1"/>
</dbReference>
<dbReference type="Pfam" id="PF08700">
    <property type="entry name" value="VPS51_Exo84_N"/>
    <property type="match status" value="1"/>
</dbReference>
<dbReference type="SUPFAM" id="SSF74788">
    <property type="entry name" value="Cullin repeat-like"/>
    <property type="match status" value="1"/>
</dbReference>
<keyword id="KW-0025">Alternative splicing</keyword>
<keyword id="KW-0268">Exocytosis</keyword>
<keyword id="KW-1185">Reference proteome</keyword>
<keyword id="KW-0813">Transport</keyword>
<reference key="1">
    <citation type="journal article" date="2000" name="Nature">
        <title>Sequence and analysis of chromosome 1 of the plant Arabidopsis thaliana.</title>
        <authorList>
            <person name="Theologis A."/>
            <person name="Ecker J.R."/>
            <person name="Palm C.J."/>
            <person name="Federspiel N.A."/>
            <person name="Kaul S."/>
            <person name="White O."/>
            <person name="Alonso J."/>
            <person name="Altafi H."/>
            <person name="Araujo R."/>
            <person name="Bowman C.L."/>
            <person name="Brooks S.Y."/>
            <person name="Buehler E."/>
            <person name="Chan A."/>
            <person name="Chao Q."/>
            <person name="Chen H."/>
            <person name="Cheuk R.F."/>
            <person name="Chin C.W."/>
            <person name="Chung M.K."/>
            <person name="Conn L."/>
            <person name="Conway A.B."/>
            <person name="Conway A.R."/>
            <person name="Creasy T.H."/>
            <person name="Dewar K."/>
            <person name="Dunn P."/>
            <person name="Etgu P."/>
            <person name="Feldblyum T.V."/>
            <person name="Feng J.-D."/>
            <person name="Fong B."/>
            <person name="Fujii C.Y."/>
            <person name="Gill J.E."/>
            <person name="Goldsmith A.D."/>
            <person name="Haas B."/>
            <person name="Hansen N.F."/>
            <person name="Hughes B."/>
            <person name="Huizar L."/>
            <person name="Hunter J.L."/>
            <person name="Jenkins J."/>
            <person name="Johnson-Hopson C."/>
            <person name="Khan S."/>
            <person name="Khaykin E."/>
            <person name="Kim C.J."/>
            <person name="Koo H.L."/>
            <person name="Kremenetskaia I."/>
            <person name="Kurtz D.B."/>
            <person name="Kwan A."/>
            <person name="Lam B."/>
            <person name="Langin-Hooper S."/>
            <person name="Lee A."/>
            <person name="Lee J.M."/>
            <person name="Lenz C.A."/>
            <person name="Li J.H."/>
            <person name="Li Y.-P."/>
            <person name="Lin X."/>
            <person name="Liu S.X."/>
            <person name="Liu Z.A."/>
            <person name="Luros J.S."/>
            <person name="Maiti R."/>
            <person name="Marziali A."/>
            <person name="Militscher J."/>
            <person name="Miranda M."/>
            <person name="Nguyen M."/>
            <person name="Nierman W.C."/>
            <person name="Osborne B.I."/>
            <person name="Pai G."/>
            <person name="Peterson J."/>
            <person name="Pham P.K."/>
            <person name="Rizzo M."/>
            <person name="Rooney T."/>
            <person name="Rowley D."/>
            <person name="Sakano H."/>
            <person name="Salzberg S.L."/>
            <person name="Schwartz J.R."/>
            <person name="Shinn P."/>
            <person name="Southwick A.M."/>
            <person name="Sun H."/>
            <person name="Tallon L.J."/>
            <person name="Tambunga G."/>
            <person name="Toriumi M.J."/>
            <person name="Town C.D."/>
            <person name="Utterback T."/>
            <person name="Van Aken S."/>
            <person name="Vaysberg M."/>
            <person name="Vysotskaia V.S."/>
            <person name="Walker M."/>
            <person name="Wu D."/>
            <person name="Yu G."/>
            <person name="Fraser C.M."/>
            <person name="Venter J.C."/>
            <person name="Davis R.W."/>
        </authorList>
    </citation>
    <scope>NUCLEOTIDE SEQUENCE [LARGE SCALE GENOMIC DNA]</scope>
    <source>
        <strain>cv. Columbia</strain>
    </source>
</reference>
<reference key="2">
    <citation type="journal article" date="2017" name="Plant J.">
        <title>Araport11: a complete reannotation of the Arabidopsis thaliana reference genome.</title>
        <authorList>
            <person name="Cheng C.Y."/>
            <person name="Krishnakumar V."/>
            <person name="Chan A.P."/>
            <person name="Thibaud-Nissen F."/>
            <person name="Schobel S."/>
            <person name="Town C.D."/>
        </authorList>
    </citation>
    <scope>GENOME REANNOTATION</scope>
    <source>
        <strain>cv. Columbia</strain>
    </source>
</reference>
<reference key="3">
    <citation type="journal article" date="2010" name="New Phytol.">
        <title>Characterization of the Arabidopsis thaliana exocyst complex gene families by phylogenetic, expression profiling, and subcellular localization studies.</title>
        <authorList>
            <person name="Chong Y.T."/>
            <person name="Gidda S.K."/>
            <person name="Sanford C."/>
            <person name="Parkinson J."/>
            <person name="Mullen R.T."/>
            <person name="Goring D.R."/>
        </authorList>
    </citation>
    <scope>GENE FAMILY</scope>
    <scope>NOMENCLATURE</scope>
</reference>
<gene>
    <name type="primary">EXO84A</name>
    <name type="ordered locus">At1g10385</name>
    <name type="ORF">F14N23.28</name>
</gene>
<proteinExistence type="inferred from homology"/>
<comment type="function">
    <text evidence="1">Component of the exocyst complex involved in the docking of exocytic vesicles with fusion sites on the plasma membrane during regulated or polarized secretion. Involved in polarized cell growth and organ morphogenesis. During cytokinesis, involved in cell plate initiation, cell plate maturation and formation of new primary cell wall (By similarity).</text>
</comment>
<comment type="subunit">
    <text evidence="1">The exocyst complex is composed of SEC3, SEC5, SEC6, SEC8, SEC10, EXO70A1 and EXO84.</text>
</comment>
<comment type="alternative products">
    <event type="alternative splicing"/>
    <isoform>
        <id>F4I4B6-1</id>
        <name>1</name>
        <sequence type="displayed"/>
    </isoform>
    <text>A number of isoforms are produced. According to EST sequences.</text>
</comment>
<comment type="similarity">
    <text evidence="3">Belongs to the EXO84 family.</text>
</comment>
<comment type="sequence caution" evidence="3">
    <conflict type="erroneous gene model prediction">
        <sequence resource="EMBL-CDS" id="AAD32890"/>
    </conflict>
</comment>
<sequence length="754" mass="83401">MEARERGSMSSSIGNSAELEGNLTLSDRLKVFKGSTFDPDAYVTSKCQRMNEKETRHLSSYLVELKKASAEEMRKSVYANYAAFIRTSKEISALEGQLLSMRNLLSAQAALVHGLADGVHISSLCADDADDLRDEDLYDMDNKQLSNIENWVVEFFDRLEVLLAEKRVEESMAALEEGRRVAVEAHEKRTLSPTTLLSLNNAIKEKRQELADQLAEAISQPSTRGGELRSAVLSLKKLGDGSRAHTLLLRSYERRLQANIQSLRASNTSYGVAFAAALSQLVFSTIAQAASDSQAVVGEDPAYTSELVTWAVKQAESFALLLKRHTLASSAAAGSLRVTAECVQLCASHCSSLESRGLALSPVLLKHFRPGVEQALTGNLKRIEQSSAALAASDDWSLSYTPTGSRASSTTPTAPHLKLSISAQRFNSMVQEFLEDAGPLDEALQLDGIALDGVLQVFNSYVDLLINALPGSAENEENPVHRIVKVAETESQQTALLVNALLLADELIPRSASRILPQGTSQSTPRRGSSDRQNRPEQREWKKKLQRSVDRLRDSFCRQHALELIFTEEGEVRLSSEIYILMDETTEEPEWFPSPIFQELFAKLTRIAMIVSDMFVGRERFATILLMRLTETVILWISDDQSFWEEMETGDKPLGPLGLQQFYLDMEFVMIFASQGRYLSRNLHQVIKNIIARAVEAVSATGLDPYSTLPEEEWFAEVAQIAIKMLMGKGNFGGHGERDVTSPSVSSAKSYTSN</sequence>
<protein>
    <recommendedName>
        <fullName>Exocyst complex component EXO84A</fullName>
        <shortName>AtExo80a</shortName>
    </recommendedName>
</protein>
<accession>F4I4B6</accession>
<accession>Q9SY82</accession>
<name>EX84A_ARATH</name>
<feature type="chain" id="PRO_0000424567" description="Exocyst complex component EXO84A">
    <location>
        <begin position="1"/>
        <end position="754"/>
    </location>
</feature>
<feature type="region of interest" description="Disordered" evidence="2">
    <location>
        <begin position="514"/>
        <end position="540"/>
    </location>
</feature>
<feature type="region of interest" description="Disordered" evidence="2">
    <location>
        <begin position="734"/>
        <end position="754"/>
    </location>
</feature>
<feature type="compositionally biased region" description="Polar residues" evidence="2">
    <location>
        <begin position="518"/>
        <end position="527"/>
    </location>
</feature>
<feature type="compositionally biased region" description="Basic and acidic residues" evidence="2">
    <location>
        <begin position="528"/>
        <end position="540"/>
    </location>
</feature>
<feature type="compositionally biased region" description="Polar residues" evidence="2">
    <location>
        <begin position="741"/>
        <end position="754"/>
    </location>
</feature>